<dbReference type="EMBL" id="CP000857">
    <property type="protein sequence ID" value="ACN47215.1"/>
    <property type="molecule type" value="Genomic_DNA"/>
</dbReference>
<dbReference type="RefSeq" id="WP_000626864.1">
    <property type="nucleotide sequence ID" value="NC_012125.1"/>
</dbReference>
<dbReference type="KEGG" id="sei:SPC_3128"/>
<dbReference type="HOGENOM" id="CLU_087840_0_1_6"/>
<dbReference type="Proteomes" id="UP000001599">
    <property type="component" value="Chromosome"/>
</dbReference>
<dbReference type="GO" id="GO:0005886">
    <property type="term" value="C:plasma membrane"/>
    <property type="evidence" value="ECO:0007669"/>
    <property type="project" value="UniProtKB-SubCell"/>
</dbReference>
<dbReference type="GO" id="GO:0061459">
    <property type="term" value="F:L-arginine transmembrane transporter activity"/>
    <property type="evidence" value="ECO:0007669"/>
    <property type="project" value="UniProtKB-UniRule"/>
</dbReference>
<dbReference type="HAMAP" id="MF_01901">
    <property type="entry name" value="ArgO"/>
    <property type="match status" value="1"/>
</dbReference>
<dbReference type="InterPro" id="IPR023445">
    <property type="entry name" value="Arg_export_ArgO_enterobac"/>
</dbReference>
<dbReference type="InterPro" id="IPR001123">
    <property type="entry name" value="LeuE-type"/>
</dbReference>
<dbReference type="InterPro" id="IPR004777">
    <property type="entry name" value="Lys/arg_exporter"/>
</dbReference>
<dbReference type="NCBIfam" id="TIGR00948">
    <property type="entry name" value="2a75"/>
    <property type="match status" value="1"/>
</dbReference>
<dbReference type="NCBIfam" id="NF006801">
    <property type="entry name" value="PRK09304.1"/>
    <property type="match status" value="1"/>
</dbReference>
<dbReference type="PANTHER" id="PTHR30086">
    <property type="entry name" value="ARGININE EXPORTER PROTEIN ARGO"/>
    <property type="match status" value="1"/>
</dbReference>
<dbReference type="PANTHER" id="PTHR30086:SF20">
    <property type="entry name" value="ARGININE EXPORTER PROTEIN ARGO-RELATED"/>
    <property type="match status" value="1"/>
</dbReference>
<dbReference type="Pfam" id="PF01810">
    <property type="entry name" value="LysE"/>
    <property type="match status" value="1"/>
</dbReference>
<keyword id="KW-0029">Amino-acid transport</keyword>
<keyword id="KW-0997">Cell inner membrane</keyword>
<keyword id="KW-1003">Cell membrane</keyword>
<keyword id="KW-0472">Membrane</keyword>
<keyword id="KW-0812">Transmembrane</keyword>
<keyword id="KW-1133">Transmembrane helix</keyword>
<keyword id="KW-0813">Transport</keyword>
<name>ARGO_SALPC</name>
<feature type="chain" id="PRO_1000188723" description="Arginine exporter protein ArgO">
    <location>
        <begin position="1"/>
        <end position="211"/>
    </location>
</feature>
<feature type="transmembrane region" description="Helical" evidence="1">
    <location>
        <begin position="1"/>
        <end position="21"/>
    </location>
</feature>
<feature type="transmembrane region" description="Helical" evidence="1">
    <location>
        <begin position="37"/>
        <end position="57"/>
    </location>
</feature>
<feature type="transmembrane region" description="Helical" evidence="1">
    <location>
        <begin position="68"/>
        <end position="88"/>
    </location>
</feature>
<feature type="transmembrane region" description="Helical" evidence="1">
    <location>
        <begin position="111"/>
        <end position="131"/>
    </location>
</feature>
<feature type="transmembrane region" description="Helical" evidence="1">
    <location>
        <begin position="147"/>
        <end position="167"/>
    </location>
</feature>
<feature type="transmembrane region" description="Helical" evidence="1">
    <location>
        <begin position="179"/>
        <end position="199"/>
    </location>
</feature>
<accession>C0PY41</accession>
<sequence>MISYYFQGFALGAAMILPLGPQNAFVMNQGIRRQYHLMIALLCALSDLVLISAGIFGGSALLMQSPWLLALVTWGGVAFLLWYGFGALKTAMSSNLELASAEVMKQGRWKIIATMLAVTWLNPHVYLDTFVVLGSLGGQLAMEPKRWFALGTISASFLWFFGLALLAAWLAPRLRTVKAQRIINILVGVVMWLIAFQLAREGVAHMHALFN</sequence>
<proteinExistence type="inferred from homology"/>
<comment type="function">
    <text evidence="1">Involved in the export of arginine. Important to control the intracellular level of arginine and the correct balance between arginine and lysine.</text>
</comment>
<comment type="catalytic activity">
    <reaction evidence="1">
        <text>L-arginine(in) = L-arginine(out)</text>
        <dbReference type="Rhea" id="RHEA:32143"/>
        <dbReference type="ChEBI" id="CHEBI:32682"/>
    </reaction>
    <physiologicalReaction direction="left-to-right" evidence="1">
        <dbReference type="Rhea" id="RHEA:32144"/>
    </physiologicalReaction>
</comment>
<comment type="subcellular location">
    <subcellularLocation>
        <location evidence="1">Cell inner membrane</location>
        <topology evidence="1">Multi-pass membrane protein</topology>
    </subcellularLocation>
</comment>
<comment type="similarity">
    <text evidence="1">Belongs to the LysE/ArgO transporter (TC 2.A.75) family.</text>
</comment>
<gene>
    <name evidence="1" type="primary">argO</name>
    <name type="ordered locus">SPC_3128</name>
</gene>
<reference key="1">
    <citation type="journal article" date="2009" name="PLoS ONE">
        <title>Salmonella paratyphi C: genetic divergence from Salmonella choleraesuis and pathogenic convergence with Salmonella typhi.</title>
        <authorList>
            <person name="Liu W.-Q."/>
            <person name="Feng Y."/>
            <person name="Wang Y."/>
            <person name="Zou Q.-H."/>
            <person name="Chen F."/>
            <person name="Guo J.-T."/>
            <person name="Peng Y.-H."/>
            <person name="Jin Y."/>
            <person name="Li Y.-G."/>
            <person name="Hu S.-N."/>
            <person name="Johnston R.N."/>
            <person name="Liu G.-R."/>
            <person name="Liu S.-L."/>
        </authorList>
    </citation>
    <scope>NUCLEOTIDE SEQUENCE [LARGE SCALE GENOMIC DNA]</scope>
    <source>
        <strain>RKS4594</strain>
    </source>
</reference>
<organism>
    <name type="scientific">Salmonella paratyphi C (strain RKS4594)</name>
    <dbReference type="NCBI Taxonomy" id="476213"/>
    <lineage>
        <taxon>Bacteria</taxon>
        <taxon>Pseudomonadati</taxon>
        <taxon>Pseudomonadota</taxon>
        <taxon>Gammaproteobacteria</taxon>
        <taxon>Enterobacterales</taxon>
        <taxon>Enterobacteriaceae</taxon>
        <taxon>Salmonella</taxon>
    </lineage>
</organism>
<protein>
    <recommendedName>
        <fullName evidence="1">Arginine exporter protein ArgO</fullName>
    </recommendedName>
</protein>
<evidence type="ECO:0000255" key="1">
    <source>
        <dbReference type="HAMAP-Rule" id="MF_01901"/>
    </source>
</evidence>